<sequence length="273" mass="28918">MTDSTIRIAIVGAGGRMGRQLIQAVTQMEGVVLGAAIERKGSTLVGSDAGELAGVGLLNVIVGDDLSQLTDNFDVLIDFTRPEGTLEHLAICRQHRKAMVIGTTGFDEAGKAAISEAAADIGIVFAANFSVGVNVVLKLLEKAAKVMGDYTDIEIIEAHHRHKVDAPSGTALAMGEAIADAMGRSLKDCAVYSREGYTGERKPGTIGFATVRAGDIVGEHTAMFADIGERVEITHKATSRMTFAHGAVKSTIWLGKHDNGLFDMRDVLNLNEL</sequence>
<feature type="chain" id="PRO_1000057690" description="4-hydroxy-tetrahydrodipicolinate reductase">
    <location>
        <begin position="1"/>
        <end position="273"/>
    </location>
</feature>
<feature type="active site" description="Proton donor/acceptor" evidence="1">
    <location>
        <position position="159"/>
    </location>
</feature>
<feature type="active site" description="Proton donor" evidence="1">
    <location>
        <position position="163"/>
    </location>
</feature>
<feature type="binding site" evidence="1">
    <location>
        <begin position="12"/>
        <end position="17"/>
    </location>
    <ligand>
        <name>NAD(+)</name>
        <dbReference type="ChEBI" id="CHEBI:57540"/>
    </ligand>
</feature>
<feature type="binding site" evidence="1">
    <location>
        <position position="38"/>
    </location>
    <ligand>
        <name>NAD(+)</name>
        <dbReference type="ChEBI" id="CHEBI:57540"/>
    </ligand>
</feature>
<feature type="binding site" evidence="1">
    <location>
        <position position="39"/>
    </location>
    <ligand>
        <name>NADP(+)</name>
        <dbReference type="ChEBI" id="CHEBI:58349"/>
    </ligand>
</feature>
<feature type="binding site" evidence="1">
    <location>
        <begin position="102"/>
        <end position="104"/>
    </location>
    <ligand>
        <name>NAD(+)</name>
        <dbReference type="ChEBI" id="CHEBI:57540"/>
    </ligand>
</feature>
<feature type="binding site" evidence="1">
    <location>
        <begin position="126"/>
        <end position="129"/>
    </location>
    <ligand>
        <name>NAD(+)</name>
        <dbReference type="ChEBI" id="CHEBI:57540"/>
    </ligand>
</feature>
<feature type="binding site" evidence="1">
    <location>
        <position position="160"/>
    </location>
    <ligand>
        <name>(S)-2,3,4,5-tetrahydrodipicolinate</name>
        <dbReference type="ChEBI" id="CHEBI:16845"/>
    </ligand>
</feature>
<feature type="binding site" evidence="1">
    <location>
        <begin position="169"/>
        <end position="170"/>
    </location>
    <ligand>
        <name>(S)-2,3,4,5-tetrahydrodipicolinate</name>
        <dbReference type="ChEBI" id="CHEBI:16845"/>
    </ligand>
</feature>
<name>DAPB_YERP3</name>
<gene>
    <name evidence="1" type="primary">dapB</name>
    <name type="ordered locus">YpsIP31758_3455</name>
</gene>
<reference key="1">
    <citation type="journal article" date="2007" name="PLoS Genet.">
        <title>The complete genome sequence of Yersinia pseudotuberculosis IP31758, the causative agent of Far East scarlet-like fever.</title>
        <authorList>
            <person name="Eppinger M."/>
            <person name="Rosovitz M.J."/>
            <person name="Fricke W.F."/>
            <person name="Rasko D.A."/>
            <person name="Kokorina G."/>
            <person name="Fayolle C."/>
            <person name="Lindler L.E."/>
            <person name="Carniel E."/>
            <person name="Ravel J."/>
        </authorList>
    </citation>
    <scope>NUCLEOTIDE SEQUENCE [LARGE SCALE GENOMIC DNA]</scope>
    <source>
        <strain>IP 31758</strain>
    </source>
</reference>
<proteinExistence type="inferred from homology"/>
<organism>
    <name type="scientific">Yersinia pseudotuberculosis serotype O:1b (strain IP 31758)</name>
    <dbReference type="NCBI Taxonomy" id="349747"/>
    <lineage>
        <taxon>Bacteria</taxon>
        <taxon>Pseudomonadati</taxon>
        <taxon>Pseudomonadota</taxon>
        <taxon>Gammaproteobacteria</taxon>
        <taxon>Enterobacterales</taxon>
        <taxon>Yersiniaceae</taxon>
        <taxon>Yersinia</taxon>
    </lineage>
</organism>
<dbReference type="EC" id="1.17.1.8" evidence="1"/>
<dbReference type="EMBL" id="CP000720">
    <property type="protein sequence ID" value="ABS47918.1"/>
    <property type="molecule type" value="Genomic_DNA"/>
</dbReference>
<dbReference type="RefSeq" id="WP_012105691.1">
    <property type="nucleotide sequence ID" value="NC_009708.1"/>
</dbReference>
<dbReference type="SMR" id="A7FMD2"/>
<dbReference type="KEGG" id="ypi:YpsIP31758_3455"/>
<dbReference type="HOGENOM" id="CLU_047479_2_1_6"/>
<dbReference type="UniPathway" id="UPA00034">
    <property type="reaction ID" value="UER00018"/>
</dbReference>
<dbReference type="Proteomes" id="UP000002412">
    <property type="component" value="Chromosome"/>
</dbReference>
<dbReference type="GO" id="GO:0005829">
    <property type="term" value="C:cytosol"/>
    <property type="evidence" value="ECO:0007669"/>
    <property type="project" value="TreeGrafter"/>
</dbReference>
<dbReference type="GO" id="GO:0008839">
    <property type="term" value="F:4-hydroxy-tetrahydrodipicolinate reductase"/>
    <property type="evidence" value="ECO:0007669"/>
    <property type="project" value="UniProtKB-EC"/>
</dbReference>
<dbReference type="GO" id="GO:0051287">
    <property type="term" value="F:NAD binding"/>
    <property type="evidence" value="ECO:0007669"/>
    <property type="project" value="UniProtKB-UniRule"/>
</dbReference>
<dbReference type="GO" id="GO:0050661">
    <property type="term" value="F:NADP binding"/>
    <property type="evidence" value="ECO:0007669"/>
    <property type="project" value="UniProtKB-UniRule"/>
</dbReference>
<dbReference type="GO" id="GO:0016726">
    <property type="term" value="F:oxidoreductase activity, acting on CH or CH2 groups, NAD or NADP as acceptor"/>
    <property type="evidence" value="ECO:0007669"/>
    <property type="project" value="UniProtKB-UniRule"/>
</dbReference>
<dbReference type="GO" id="GO:0019877">
    <property type="term" value="P:diaminopimelate biosynthetic process"/>
    <property type="evidence" value="ECO:0007669"/>
    <property type="project" value="UniProtKB-UniRule"/>
</dbReference>
<dbReference type="GO" id="GO:0009089">
    <property type="term" value="P:lysine biosynthetic process via diaminopimelate"/>
    <property type="evidence" value="ECO:0007669"/>
    <property type="project" value="UniProtKB-UniRule"/>
</dbReference>
<dbReference type="CDD" id="cd02274">
    <property type="entry name" value="DHDPR_N"/>
    <property type="match status" value="1"/>
</dbReference>
<dbReference type="FunFam" id="3.30.360.10:FF:000004">
    <property type="entry name" value="4-hydroxy-tetrahydrodipicolinate reductase"/>
    <property type="match status" value="1"/>
</dbReference>
<dbReference type="FunFam" id="3.40.50.720:FF:000048">
    <property type="entry name" value="4-hydroxy-tetrahydrodipicolinate reductase"/>
    <property type="match status" value="1"/>
</dbReference>
<dbReference type="Gene3D" id="3.30.360.10">
    <property type="entry name" value="Dihydrodipicolinate Reductase, domain 2"/>
    <property type="match status" value="1"/>
</dbReference>
<dbReference type="Gene3D" id="3.40.50.720">
    <property type="entry name" value="NAD(P)-binding Rossmann-like Domain"/>
    <property type="match status" value="1"/>
</dbReference>
<dbReference type="HAMAP" id="MF_00102">
    <property type="entry name" value="DapB"/>
    <property type="match status" value="1"/>
</dbReference>
<dbReference type="InterPro" id="IPR022663">
    <property type="entry name" value="DapB_C"/>
</dbReference>
<dbReference type="InterPro" id="IPR000846">
    <property type="entry name" value="DapB_N"/>
</dbReference>
<dbReference type="InterPro" id="IPR022664">
    <property type="entry name" value="DapB_N_CS"/>
</dbReference>
<dbReference type="InterPro" id="IPR023940">
    <property type="entry name" value="DHDPR_bac"/>
</dbReference>
<dbReference type="InterPro" id="IPR036291">
    <property type="entry name" value="NAD(P)-bd_dom_sf"/>
</dbReference>
<dbReference type="NCBIfam" id="TIGR00036">
    <property type="entry name" value="dapB"/>
    <property type="match status" value="1"/>
</dbReference>
<dbReference type="PANTHER" id="PTHR20836:SF0">
    <property type="entry name" value="4-HYDROXY-TETRAHYDRODIPICOLINATE REDUCTASE 1, CHLOROPLASTIC-RELATED"/>
    <property type="match status" value="1"/>
</dbReference>
<dbReference type="PANTHER" id="PTHR20836">
    <property type="entry name" value="DIHYDRODIPICOLINATE REDUCTASE"/>
    <property type="match status" value="1"/>
</dbReference>
<dbReference type="Pfam" id="PF05173">
    <property type="entry name" value="DapB_C"/>
    <property type="match status" value="1"/>
</dbReference>
<dbReference type="Pfam" id="PF01113">
    <property type="entry name" value="DapB_N"/>
    <property type="match status" value="1"/>
</dbReference>
<dbReference type="PIRSF" id="PIRSF000161">
    <property type="entry name" value="DHPR"/>
    <property type="match status" value="1"/>
</dbReference>
<dbReference type="SUPFAM" id="SSF55347">
    <property type="entry name" value="Glyceraldehyde-3-phosphate dehydrogenase-like, C-terminal domain"/>
    <property type="match status" value="1"/>
</dbReference>
<dbReference type="SUPFAM" id="SSF51735">
    <property type="entry name" value="NAD(P)-binding Rossmann-fold domains"/>
    <property type="match status" value="1"/>
</dbReference>
<dbReference type="PROSITE" id="PS01298">
    <property type="entry name" value="DAPB"/>
    <property type="match status" value="1"/>
</dbReference>
<evidence type="ECO:0000255" key="1">
    <source>
        <dbReference type="HAMAP-Rule" id="MF_00102"/>
    </source>
</evidence>
<evidence type="ECO:0000305" key="2"/>
<accession>A7FMD2</accession>
<comment type="function">
    <text evidence="1">Catalyzes the conversion of 4-hydroxy-tetrahydrodipicolinate (HTPA) to tetrahydrodipicolinate.</text>
</comment>
<comment type="catalytic activity">
    <reaction evidence="1">
        <text>(S)-2,3,4,5-tetrahydrodipicolinate + NAD(+) + H2O = (2S,4S)-4-hydroxy-2,3,4,5-tetrahydrodipicolinate + NADH + H(+)</text>
        <dbReference type="Rhea" id="RHEA:35323"/>
        <dbReference type="ChEBI" id="CHEBI:15377"/>
        <dbReference type="ChEBI" id="CHEBI:15378"/>
        <dbReference type="ChEBI" id="CHEBI:16845"/>
        <dbReference type="ChEBI" id="CHEBI:57540"/>
        <dbReference type="ChEBI" id="CHEBI:57945"/>
        <dbReference type="ChEBI" id="CHEBI:67139"/>
        <dbReference type="EC" id="1.17.1.8"/>
    </reaction>
</comment>
<comment type="catalytic activity">
    <reaction evidence="1">
        <text>(S)-2,3,4,5-tetrahydrodipicolinate + NADP(+) + H2O = (2S,4S)-4-hydroxy-2,3,4,5-tetrahydrodipicolinate + NADPH + H(+)</text>
        <dbReference type="Rhea" id="RHEA:35331"/>
        <dbReference type="ChEBI" id="CHEBI:15377"/>
        <dbReference type="ChEBI" id="CHEBI:15378"/>
        <dbReference type="ChEBI" id="CHEBI:16845"/>
        <dbReference type="ChEBI" id="CHEBI:57783"/>
        <dbReference type="ChEBI" id="CHEBI:58349"/>
        <dbReference type="ChEBI" id="CHEBI:67139"/>
        <dbReference type="EC" id="1.17.1.8"/>
    </reaction>
</comment>
<comment type="pathway">
    <text evidence="1">Amino-acid biosynthesis; L-lysine biosynthesis via DAP pathway; (S)-tetrahydrodipicolinate from L-aspartate: step 4/4.</text>
</comment>
<comment type="subunit">
    <text evidence="1">Homotetramer.</text>
</comment>
<comment type="subcellular location">
    <subcellularLocation>
        <location evidence="1">Cytoplasm</location>
    </subcellularLocation>
</comment>
<comment type="similarity">
    <text evidence="1">Belongs to the DapB family.</text>
</comment>
<comment type="caution">
    <text evidence="2">Was originally thought to be a dihydrodipicolinate reductase (DHDPR), catalyzing the conversion of dihydrodipicolinate to tetrahydrodipicolinate. However, it was shown in E.coli that the substrate of the enzymatic reaction is not dihydrodipicolinate (DHDP) but in fact (2S,4S)-4-hydroxy-2,3,4,5-tetrahydrodipicolinic acid (HTPA), the product released by the DapA-catalyzed reaction.</text>
</comment>
<protein>
    <recommendedName>
        <fullName evidence="1">4-hydroxy-tetrahydrodipicolinate reductase</fullName>
        <shortName evidence="1">HTPA reductase</shortName>
        <ecNumber evidence="1">1.17.1.8</ecNumber>
    </recommendedName>
</protein>
<keyword id="KW-0028">Amino-acid biosynthesis</keyword>
<keyword id="KW-0963">Cytoplasm</keyword>
<keyword id="KW-0220">Diaminopimelate biosynthesis</keyword>
<keyword id="KW-0457">Lysine biosynthesis</keyword>
<keyword id="KW-0520">NAD</keyword>
<keyword id="KW-0521">NADP</keyword>
<keyword id="KW-0560">Oxidoreductase</keyword>